<protein>
    <recommendedName>
        <fullName>Retina and anterior neural fold homeobox protein 2</fullName>
    </recommendedName>
    <alternativeName>
        <fullName>Q50-type retinal homeobox protein</fullName>
    </alternativeName>
    <alternativeName>
        <fullName>Retina and anterior neural fold homeobox-like protein 1</fullName>
    </alternativeName>
</protein>
<gene>
    <name type="primary">RAX2</name>
    <name type="synonym">QRX</name>
    <name type="synonym">RAXL1</name>
</gene>
<proteinExistence type="evidence at protein level"/>
<accession>Q96IS3</accession>
<feature type="chain" id="PRO_0000285048" description="Retina and anterior neural fold homeobox protein 2">
    <location>
        <begin position="1"/>
        <end position="184"/>
    </location>
</feature>
<feature type="DNA-binding region" description="Homeobox" evidence="1">
    <location>
        <begin position="27"/>
        <end position="86"/>
    </location>
</feature>
<feature type="region of interest" description="Disordered" evidence="2">
    <location>
        <begin position="1"/>
        <end position="33"/>
    </location>
</feature>
<feature type="compositionally biased region" description="Low complexity" evidence="2">
    <location>
        <begin position="1"/>
        <end position="10"/>
    </location>
</feature>
<feature type="sequence variant" id="VAR_087740" description="In RP95; uncertain significance." evidence="4">
    <original>S</original>
    <variation>P</variation>
    <location>
        <position position="49"/>
    </location>
</feature>
<feature type="sequence variant" id="VAR_087741" description="In RP95." evidence="4">
    <original>P</original>
    <variation>R</variation>
    <location>
        <position position="52"/>
    </location>
</feature>
<feature type="sequence variant" id="VAR_031907" description="In ARMD6; uncertain significance; increased transactivation and DNA-binding activity; dbSNP:rs121908280." evidence="3">
    <original>R</original>
    <variation>Q</variation>
    <location>
        <position position="87"/>
    </location>
</feature>
<feature type="sequence variant" id="VAR_031908" description="In CORD11; uncertain significance; decreased interaction with CRX and transactivation activity; dbSNP:rs121908281." evidence="3">
    <original>G</original>
    <variation>R</variation>
    <location>
        <position position="137"/>
    </location>
</feature>
<feature type="sequence variant" id="VAR_031909" description="In CORD11; uncertain significance; decreased interaction with CRX and increased transactivation activity." evidence="3">
    <original>P</original>
    <variation>PGP</variation>
    <location>
        <position position="140"/>
    </location>
</feature>
<dbReference type="EMBL" id="AY211277">
    <property type="protein sequence ID" value="AAP41547.1"/>
    <property type="molecule type" value="mRNA"/>
</dbReference>
<dbReference type="EMBL" id="AC005777">
    <property type="status" value="NOT_ANNOTATED_CDS"/>
    <property type="molecule type" value="Genomic_DNA"/>
</dbReference>
<dbReference type="EMBL" id="BC007284">
    <property type="protein sequence ID" value="AAH07284.1"/>
    <property type="molecule type" value="mRNA"/>
</dbReference>
<dbReference type="EMBL" id="BC018709">
    <property type="protein sequence ID" value="AAH18709.1"/>
    <property type="molecule type" value="mRNA"/>
</dbReference>
<dbReference type="EMBL" id="BC032512">
    <property type="protein sequence ID" value="AAH32512.1"/>
    <property type="molecule type" value="mRNA"/>
</dbReference>
<dbReference type="CCDS" id="CCDS12112.1"/>
<dbReference type="RefSeq" id="NP_001306003.2">
    <property type="nucleotide sequence ID" value="NM_001319074.4"/>
</dbReference>
<dbReference type="RefSeq" id="NP_116142.1">
    <property type="nucleotide sequence ID" value="NM_032753.4"/>
</dbReference>
<dbReference type="SMR" id="Q96IS3"/>
<dbReference type="FunCoup" id="Q96IS3">
    <property type="interactions" value="124"/>
</dbReference>
<dbReference type="IntAct" id="Q96IS3">
    <property type="interactions" value="1"/>
</dbReference>
<dbReference type="STRING" id="9606.ENSP00000450456"/>
<dbReference type="BioMuta" id="RAX2"/>
<dbReference type="DMDM" id="74760880"/>
<dbReference type="jPOST" id="Q96IS3"/>
<dbReference type="MassIVE" id="Q96IS3"/>
<dbReference type="PaxDb" id="9606-ENSP00000450456"/>
<dbReference type="PeptideAtlas" id="Q96IS3"/>
<dbReference type="ProteomicsDB" id="76849"/>
<dbReference type="Antibodypedia" id="11029">
    <property type="antibodies" value="44 antibodies from 18 providers"/>
</dbReference>
<dbReference type="DNASU" id="84839"/>
<dbReference type="Ensembl" id="ENST00000555633.3">
    <property type="protein sequence ID" value="ENSP00000450456.3"/>
    <property type="gene ID" value="ENSG00000173976.16"/>
</dbReference>
<dbReference type="Ensembl" id="ENST00000555978.5">
    <property type="protein sequence ID" value="ENSP00000450687.2"/>
    <property type="gene ID" value="ENSG00000173976.16"/>
</dbReference>
<dbReference type="GeneID" id="84839"/>
<dbReference type="KEGG" id="hsa:84839"/>
<dbReference type="MANE-Select" id="ENST00000555633.3">
    <property type="protein sequence ID" value="ENSP00000450456.3"/>
    <property type="RefSeq nucleotide sequence ID" value="NM_001319074.4"/>
    <property type="RefSeq protein sequence ID" value="NP_001306003.2"/>
</dbReference>
<dbReference type="UCSC" id="uc002lyr.4">
    <property type="organism name" value="human"/>
</dbReference>
<dbReference type="AGR" id="HGNC:18286"/>
<dbReference type="CTD" id="84839"/>
<dbReference type="DisGeNET" id="84839"/>
<dbReference type="GeneCards" id="RAX2"/>
<dbReference type="HGNC" id="HGNC:18286">
    <property type="gene designation" value="RAX2"/>
</dbReference>
<dbReference type="HPA" id="ENSG00000173976">
    <property type="expression patterns" value="Tissue enriched (retina)"/>
</dbReference>
<dbReference type="MalaCards" id="RAX2"/>
<dbReference type="MIM" id="610362">
    <property type="type" value="gene"/>
</dbReference>
<dbReference type="MIM" id="610381">
    <property type="type" value="phenotype"/>
</dbReference>
<dbReference type="MIM" id="613757">
    <property type="type" value="phenotype"/>
</dbReference>
<dbReference type="MIM" id="620102">
    <property type="type" value="phenotype"/>
</dbReference>
<dbReference type="neXtProt" id="NX_Q96IS3"/>
<dbReference type="OpenTargets" id="ENSG00000173976"/>
<dbReference type="Orphanet" id="1872">
    <property type="disease" value="Cone rod dystrophy"/>
</dbReference>
<dbReference type="PharmGKB" id="PA162400734"/>
<dbReference type="VEuPathDB" id="HostDB:ENSG00000173976"/>
<dbReference type="eggNOG" id="KOG0490">
    <property type="taxonomic scope" value="Eukaryota"/>
</dbReference>
<dbReference type="GeneTree" id="ENSGT00940000163572"/>
<dbReference type="HOGENOM" id="CLU_047013_4_0_1"/>
<dbReference type="InParanoid" id="Q96IS3"/>
<dbReference type="OMA" id="TLDRTWQ"/>
<dbReference type="OrthoDB" id="6159439at2759"/>
<dbReference type="PAN-GO" id="Q96IS3">
    <property type="GO annotations" value="3 GO annotations based on evolutionary models"/>
</dbReference>
<dbReference type="PhylomeDB" id="Q96IS3"/>
<dbReference type="PathwayCommons" id="Q96IS3"/>
<dbReference type="SignaLink" id="Q96IS3"/>
<dbReference type="BioGRID-ORCS" id="84839">
    <property type="hits" value="14 hits in 1163 CRISPR screens"/>
</dbReference>
<dbReference type="ChiTaRS" id="RAX2">
    <property type="organism name" value="human"/>
</dbReference>
<dbReference type="GenomeRNAi" id="84839"/>
<dbReference type="Pharos" id="Q96IS3">
    <property type="development level" value="Tbio"/>
</dbReference>
<dbReference type="PRO" id="PR:Q96IS3"/>
<dbReference type="Proteomes" id="UP000005640">
    <property type="component" value="Chromosome 19"/>
</dbReference>
<dbReference type="RNAct" id="Q96IS3">
    <property type="molecule type" value="protein"/>
</dbReference>
<dbReference type="Bgee" id="ENSG00000173976">
    <property type="expression patterns" value="Expressed in tendon of biceps brachii and 32 other cell types or tissues"/>
</dbReference>
<dbReference type="GO" id="GO:0000785">
    <property type="term" value="C:chromatin"/>
    <property type="evidence" value="ECO:0000247"/>
    <property type="project" value="NTNU_SB"/>
</dbReference>
<dbReference type="GO" id="GO:0005634">
    <property type="term" value="C:nucleus"/>
    <property type="evidence" value="ECO:0007669"/>
    <property type="project" value="UniProtKB-SubCell"/>
</dbReference>
<dbReference type="GO" id="GO:0001228">
    <property type="term" value="F:DNA-binding transcription activator activity, RNA polymerase II-specific"/>
    <property type="evidence" value="ECO:0000314"/>
    <property type="project" value="NTNU_SB"/>
</dbReference>
<dbReference type="GO" id="GO:0000981">
    <property type="term" value="F:DNA-binding transcription factor activity, RNA polymerase II-specific"/>
    <property type="evidence" value="ECO:0000247"/>
    <property type="project" value="NTNU_SB"/>
</dbReference>
<dbReference type="GO" id="GO:0000978">
    <property type="term" value="F:RNA polymerase II cis-regulatory region sequence-specific DNA binding"/>
    <property type="evidence" value="ECO:0000314"/>
    <property type="project" value="NTNU_SB"/>
</dbReference>
<dbReference type="GO" id="GO:0045944">
    <property type="term" value="P:positive regulation of transcription by RNA polymerase II"/>
    <property type="evidence" value="ECO:0000314"/>
    <property type="project" value="NTNU_SB"/>
</dbReference>
<dbReference type="GO" id="GO:0006357">
    <property type="term" value="P:regulation of transcription by RNA polymerase II"/>
    <property type="evidence" value="ECO:0000318"/>
    <property type="project" value="GO_Central"/>
</dbReference>
<dbReference type="GO" id="GO:0007601">
    <property type="term" value="P:visual perception"/>
    <property type="evidence" value="ECO:0007669"/>
    <property type="project" value="UniProtKB-KW"/>
</dbReference>
<dbReference type="CDD" id="cd00086">
    <property type="entry name" value="homeodomain"/>
    <property type="match status" value="1"/>
</dbReference>
<dbReference type="FunFam" id="1.10.10.60:FF:000071">
    <property type="entry name" value="Retinal homeobox gene 2"/>
    <property type="match status" value="1"/>
</dbReference>
<dbReference type="Gene3D" id="1.10.10.60">
    <property type="entry name" value="Homeodomain-like"/>
    <property type="match status" value="1"/>
</dbReference>
<dbReference type="InterPro" id="IPR001356">
    <property type="entry name" value="HD"/>
</dbReference>
<dbReference type="InterPro" id="IPR017970">
    <property type="entry name" value="Homeobox_CS"/>
</dbReference>
<dbReference type="InterPro" id="IPR009057">
    <property type="entry name" value="Homeodomain-like_sf"/>
</dbReference>
<dbReference type="InterPro" id="IPR043562">
    <property type="entry name" value="RAX/RAX2"/>
</dbReference>
<dbReference type="PANTHER" id="PTHR46271">
    <property type="entry name" value="HOMEOBOX PROTEIN, PUTATIVE-RELATED"/>
    <property type="match status" value="1"/>
</dbReference>
<dbReference type="PANTHER" id="PTHR46271:SF2">
    <property type="entry name" value="RETINA AND ANTERIOR NEURAL FOLD HOMEOBOX PROTEIN 2"/>
    <property type="match status" value="1"/>
</dbReference>
<dbReference type="Pfam" id="PF00046">
    <property type="entry name" value="Homeodomain"/>
    <property type="match status" value="1"/>
</dbReference>
<dbReference type="SMART" id="SM00389">
    <property type="entry name" value="HOX"/>
    <property type="match status" value="1"/>
</dbReference>
<dbReference type="SUPFAM" id="SSF46689">
    <property type="entry name" value="Homeodomain-like"/>
    <property type="match status" value="1"/>
</dbReference>
<dbReference type="PROSITE" id="PS00027">
    <property type="entry name" value="HOMEOBOX_1"/>
    <property type="match status" value="1"/>
</dbReference>
<dbReference type="PROSITE" id="PS50071">
    <property type="entry name" value="HOMEOBOX_2"/>
    <property type="match status" value="1"/>
</dbReference>
<comment type="function">
    <text evidence="3">May be involved in modulating the expression of photoreceptor specific genes. Binds to the Ret-1 and Bat-1 element within the rhodopsin promoter.</text>
</comment>
<comment type="subunit">
    <text evidence="3">Interacts with CRX.</text>
</comment>
<comment type="subcellular location">
    <subcellularLocation>
        <location evidence="1">Nucleus</location>
    </subcellularLocation>
</comment>
<comment type="domain">
    <text>The Homeobox transactivates the Ret-1 element in the presence of CRX and NRL.</text>
</comment>
<comment type="disease" evidence="3">
    <disease id="DI-00059">
        <name>Macular degeneration, age-related, 6</name>
        <acronym>ARMD6</acronym>
        <description>A form of age-related macular degeneration, a multifactorial eye disease and the most common cause of irreversible vision loss in the developed world. In most patients, the disease is manifest as ophthalmoscopically visible yellowish accumulations of protein and lipid that lie beneath the retinal pigment epithelium and within an elastin-containing structure known as Bruch membrane.</description>
        <dbReference type="MIM" id="613757"/>
    </disease>
    <text>Disease susceptibility is associated with variants affecting the gene represented in this entry.</text>
</comment>
<comment type="disease" evidence="3">
    <disease id="DI-00325">
        <name>Cone-rod dystrophy 11</name>
        <acronym>CORD11</acronym>
        <description>An inherited retinal dystrophy characterized by retinal pigment deposits visible on fundus examination, predominantly in the macular region, and initial loss of cone photoreceptors followed by rod degeneration. This leads to decreased visual acuity and sensitivity in the central visual field, followed by loss of peripheral vision. Severe loss of vision occurs earlier than in retinitis pigmentosa, due to cone photoreceptors degenerating at a higher rate than rod photoreceptors.</description>
        <dbReference type="MIM" id="610381"/>
    </disease>
    <text>The disease may be caused by variants affecting the gene represented in this entry.</text>
</comment>
<comment type="disease" evidence="4">
    <disease id="DI-06515">
        <name>Retinitis pigmentosa 95</name>
        <acronym>RP95</acronym>
        <description>A form of retinitis pigmentosa, a retinal dystrophy belonging to the group of pigmentary retinopathies. Retinitis pigmentosa is characterized by retinal pigment deposits visible on fundus examination and primary loss of rod photoreceptor cells followed by secondary loss of cone photoreceptors. Patients typically have night vision blindness and loss of midperipheral visual field. RP95 is an autosomal recessive form characterized by pale optic disks, attenuation of retinal vessels, and atrophy of the retinal pigment epithelium with bone-spicule pigmentation.</description>
        <dbReference type="MIM" id="620102"/>
    </disease>
    <text>The disease is caused by variants affecting the gene represented in this entry.</text>
</comment>
<keyword id="KW-0913">Age-related macular degeneration</keyword>
<keyword id="KW-0182">Cone-rod dystrophy</keyword>
<keyword id="KW-0225">Disease variant</keyword>
<keyword id="KW-0238">DNA-binding</keyword>
<keyword id="KW-0371">Homeobox</keyword>
<keyword id="KW-0539">Nucleus</keyword>
<keyword id="KW-1267">Proteomics identification</keyword>
<keyword id="KW-1185">Reference proteome</keyword>
<keyword id="KW-0682">Retinitis pigmentosa</keyword>
<keyword id="KW-0716">Sensory transduction</keyword>
<keyword id="KW-0804">Transcription</keyword>
<keyword id="KW-0805">Transcription regulation</keyword>
<keyword id="KW-0844">Vision</keyword>
<sequence>MFLSPGEGPATEGGGLGPGEEAPKKKHRRNRTTFTTYQLHQLERAFEASHYPDVYSREELAAKVHLPEVRVQVWFQNRRAKWRRQERLESGSGAVAAPRLPEAPALPFARPPAMSLPLEPWLGPGPPAVPGLPRLLGPGPGLQASFGPHAFAPTFADGFALEEASLRLLAKEHAQALDRAWPPA</sequence>
<name>RAX2_HUMAN</name>
<reference key="1">
    <citation type="journal article" date="2004" name="Hum. Mol. Genet.">
        <title>QRX, a novel homeobox gene, modulates photoreceptor gene expression.</title>
        <authorList>
            <person name="Wang Q.-L."/>
            <person name="Chen S."/>
            <person name="Esumi N."/>
            <person name="Swain P.K."/>
            <person name="Haines H.S."/>
            <person name="Peng G."/>
            <person name="Melia B.M."/>
            <person name="McIntosh I."/>
            <person name="Heckenlively J.R."/>
            <person name="Jacobson S.G."/>
            <person name="Stone E.M."/>
            <person name="Swaroop A."/>
            <person name="Zack D.J."/>
        </authorList>
    </citation>
    <scope>NUCLEOTIDE SEQUENCE [MRNA]</scope>
    <scope>FUNCTION</scope>
    <scope>INTERACTION WITH CRX</scope>
    <scope>VARIANT ARMD6 GLN-87</scope>
    <scope>VARIANTS CORD11 GLY-PRO-140 INS AND ARG-137</scope>
    <scope>CHARACTERIZATION OF VARIANT ARMD6 GLN-87</scope>
    <scope>CHARACTERIZATION OF VARIANTS CORD11 GLY-PRO-140 INS AND ARG-137</scope>
</reference>
<reference key="2">
    <citation type="journal article" date="2004" name="Nature">
        <title>The DNA sequence and biology of human chromosome 19.</title>
        <authorList>
            <person name="Grimwood J."/>
            <person name="Gordon L.A."/>
            <person name="Olsen A.S."/>
            <person name="Terry A."/>
            <person name="Schmutz J."/>
            <person name="Lamerdin J.E."/>
            <person name="Hellsten U."/>
            <person name="Goodstein D."/>
            <person name="Couronne O."/>
            <person name="Tran-Gyamfi M."/>
            <person name="Aerts A."/>
            <person name="Altherr M."/>
            <person name="Ashworth L."/>
            <person name="Bajorek E."/>
            <person name="Black S."/>
            <person name="Branscomb E."/>
            <person name="Caenepeel S."/>
            <person name="Carrano A.V."/>
            <person name="Caoile C."/>
            <person name="Chan Y.M."/>
            <person name="Christensen M."/>
            <person name="Cleland C.A."/>
            <person name="Copeland A."/>
            <person name="Dalin E."/>
            <person name="Dehal P."/>
            <person name="Denys M."/>
            <person name="Detter J.C."/>
            <person name="Escobar J."/>
            <person name="Flowers D."/>
            <person name="Fotopulos D."/>
            <person name="Garcia C."/>
            <person name="Georgescu A.M."/>
            <person name="Glavina T."/>
            <person name="Gomez M."/>
            <person name="Gonzales E."/>
            <person name="Groza M."/>
            <person name="Hammon N."/>
            <person name="Hawkins T."/>
            <person name="Haydu L."/>
            <person name="Ho I."/>
            <person name="Huang W."/>
            <person name="Israni S."/>
            <person name="Jett J."/>
            <person name="Kadner K."/>
            <person name="Kimball H."/>
            <person name="Kobayashi A."/>
            <person name="Larionov V."/>
            <person name="Leem S.-H."/>
            <person name="Lopez F."/>
            <person name="Lou Y."/>
            <person name="Lowry S."/>
            <person name="Malfatti S."/>
            <person name="Martinez D."/>
            <person name="McCready P.M."/>
            <person name="Medina C."/>
            <person name="Morgan J."/>
            <person name="Nelson K."/>
            <person name="Nolan M."/>
            <person name="Ovcharenko I."/>
            <person name="Pitluck S."/>
            <person name="Pollard M."/>
            <person name="Popkie A.P."/>
            <person name="Predki P."/>
            <person name="Quan G."/>
            <person name="Ramirez L."/>
            <person name="Rash S."/>
            <person name="Retterer J."/>
            <person name="Rodriguez A."/>
            <person name="Rogers S."/>
            <person name="Salamov A."/>
            <person name="Salazar A."/>
            <person name="She X."/>
            <person name="Smith D."/>
            <person name="Slezak T."/>
            <person name="Solovyev V."/>
            <person name="Thayer N."/>
            <person name="Tice H."/>
            <person name="Tsai M."/>
            <person name="Ustaszewska A."/>
            <person name="Vo N."/>
            <person name="Wagner M."/>
            <person name="Wheeler J."/>
            <person name="Wu K."/>
            <person name="Xie G."/>
            <person name="Yang J."/>
            <person name="Dubchak I."/>
            <person name="Furey T.S."/>
            <person name="DeJong P."/>
            <person name="Dickson M."/>
            <person name="Gordon D."/>
            <person name="Eichler E.E."/>
            <person name="Pennacchio L.A."/>
            <person name="Richardson P."/>
            <person name="Stubbs L."/>
            <person name="Rokhsar D.S."/>
            <person name="Myers R.M."/>
            <person name="Rubin E.M."/>
            <person name="Lucas S.M."/>
        </authorList>
    </citation>
    <scope>NUCLEOTIDE SEQUENCE [LARGE SCALE GENOMIC DNA]</scope>
</reference>
<reference key="3">
    <citation type="journal article" date="2004" name="Genome Res.">
        <title>The status, quality, and expansion of the NIH full-length cDNA project: the Mammalian Gene Collection (MGC).</title>
        <authorList>
            <consortium name="The MGC Project Team"/>
        </authorList>
    </citation>
    <scope>NUCLEOTIDE SEQUENCE [LARGE SCALE MRNA]</scope>
    <source>
        <tissue>Eye</tissue>
    </source>
</reference>
<reference key="4">
    <citation type="journal article" date="2019" name="Genet. Med.">
        <title>Biallelic sequence and structural variants in RAX2 are a novel cause for autosomal recessive inherited retinal disease.</title>
        <authorList>
            <person name="Van de Sompele S."/>
            <person name="Smith C."/>
            <person name="Karali M."/>
            <person name="Corton M."/>
            <person name="Van Schil K."/>
            <person name="Peelman F."/>
            <person name="Cherry T."/>
            <person name="Rosseel T."/>
            <person name="Verdin H."/>
            <person name="Derolez J."/>
            <person name="Van Laethem T."/>
            <person name="Khan K.N."/>
            <person name="McKibbin M."/>
            <person name="Toomes C."/>
            <person name="Ali M."/>
            <person name="Torella A."/>
            <person name="Testa F."/>
            <person name="Jimenez B."/>
            <person name="Simonelli F."/>
            <person name="De Zaeytijd J."/>
            <person name="Van den Ende J."/>
            <person name="Leroy B.P."/>
            <person name="Coppieters F."/>
            <person name="Ayuso C."/>
            <person name="Inglehearn C.F."/>
            <person name="Banfi S."/>
            <person name="De Baere E."/>
        </authorList>
    </citation>
    <scope>VARIANTS RP95 PRO-49 AND ARG-52</scope>
    <scope>INVOLVEMENT IN RP95</scope>
</reference>
<reference key="5">
    <citation type="journal article" date="2019" name="Genet. Med.">
        <authorList>
            <person name="Van de Sompele S."/>
            <person name="Smith C."/>
            <person name="Karali M."/>
            <person name="Corton M."/>
            <person name="Van Schil K."/>
            <person name="Peelman F."/>
            <person name="Cherry T."/>
            <person name="Rosseel T."/>
            <person name="Verdin H."/>
            <person name="Derolez J."/>
            <person name="Van Laethem T."/>
            <person name="Khan K.N."/>
            <person name="McKibbin M."/>
            <person name="Toomes C."/>
            <person name="Ali M."/>
            <person name="Torella A."/>
            <person name="Testa F."/>
            <person name="Jimenez B."/>
            <person name="Simonelli F."/>
            <person name="De Zaeytijd J."/>
            <person name="Van den Ende J."/>
            <person name="Leroy B.P."/>
            <person name="Coppieters F."/>
            <person name="Ayuso C."/>
            <person name="Inglehearn C.F."/>
            <person name="Banfi S."/>
            <person name="De Baere E."/>
        </authorList>
    </citation>
    <scope>ERRATUM OF PUBMED:30377383</scope>
</reference>
<organism>
    <name type="scientific">Homo sapiens</name>
    <name type="common">Human</name>
    <dbReference type="NCBI Taxonomy" id="9606"/>
    <lineage>
        <taxon>Eukaryota</taxon>
        <taxon>Metazoa</taxon>
        <taxon>Chordata</taxon>
        <taxon>Craniata</taxon>
        <taxon>Vertebrata</taxon>
        <taxon>Euteleostomi</taxon>
        <taxon>Mammalia</taxon>
        <taxon>Eutheria</taxon>
        <taxon>Euarchontoglires</taxon>
        <taxon>Primates</taxon>
        <taxon>Haplorrhini</taxon>
        <taxon>Catarrhini</taxon>
        <taxon>Hominidae</taxon>
        <taxon>Homo</taxon>
    </lineage>
</organism>
<evidence type="ECO:0000255" key="1">
    <source>
        <dbReference type="PROSITE-ProRule" id="PRU00108"/>
    </source>
</evidence>
<evidence type="ECO:0000256" key="2">
    <source>
        <dbReference type="SAM" id="MobiDB-lite"/>
    </source>
</evidence>
<evidence type="ECO:0000269" key="3">
    <source>
    </source>
</evidence>
<evidence type="ECO:0000269" key="4">
    <source>
    </source>
</evidence>